<sequence>MKRFLHRVKWPLLLSSIAVSLGIVAVACAQPNSRTIENLFRPSSAFTDKNDGSINATLYKALENREGLTQYLTMRLAPVLRNFYEENVDDDIKRNLRTFNTDTDNSFVNQEQNLRNQYRGDYLVRLQTDILDNTGGNQANWKLRDVNNKIVDDFINKLFTKNFVEYVDKSVGVLSTPLKGLIENQSNWNNIKIQAKFVDKNKRLRINNDAVYAAIQDKLLDQFVTNENPNLVSRVVFTNETPNDGFDNYFNPDLIKSPTPSYQFQVFNKYNQQDNSIKGANGFHILASNLQSYVNTNNKTIDIPNKFSSDSGGKLLLKASDMFDTFDPSFSAAFIQGYLALQKKSKGAEQTEYTKLEKDKSIIENFFVENNSAKAAMKSASSSSQTTTVHKTDLAKIFKENETTKSTDVFKGEYQKKFSNATSTSNSDSSNNSAIVDLKELKKDNNSQPDLILARGKDGIHLMGVDGGGYYLSESGRDVNKQKQFLLFRALQTKYGLIDTNTTYDFKLFDEVKKHFDKNRVLFLFNALFKLVDSKESNFLSFPQFKKFSDSIITVKNELKDLVESQYQQIVFNEVATAENKVALKLAERNQPFIDNERNKQIWMNGLAAVLPYEQDSKTGHYNELGIYYKDIIDKVSSNTSNSNSNSNSSSSDPFSKKIIDKLKENKKKVEAAVKKHVDELKVSVIPSPQYSQIILVDTKLSSDPRNTSLALNLALNAVLSSDELQNTIRRDYFVNDDQFKQAIDLDKLTFKNWNSLNNENWNIFKYTYLFDLFQKQANPSIFGNGVNESSTDNKPKINGVLDSLYNSLNLEERLDSNDLINYYSYLYTVQWLLKDNLKNLKQNLQAKLSRTTNSFLVWSLASDKDRNNTASQAMSVSSSKSVLVKMANNVASQTNQDFTKQEQQNPNYVFGSSAYNWTNNKTPTVNSAANDISSLYYTKNNGSSSTSLTLMQKSAQQTNNQQRRFGFHGIVTNTSSNNLPDAVRNRLFTSFVSQSEKSSSNGGQAQLQSTQSSGSNETIYKGALFSFGSLTKLIETIDNIPTQAEFDALYNHLTSNLNINVTGVDRSKSLQEQKTNLKNFANSNFNNTQTVQLKQAQSKTNNSNFNDVFSRFEGYIGTNKTSNYSSYNFLQDNQIYHAVYAKQINLEDVSMLGSDSLNSTDSNNSKRLDLSLEEFLSTVALEALNPNNQTQAINALIANAKNGLVRVGDNRLFSAISSQWVRKF</sequence>
<comment type="subcellular location">
    <subcellularLocation>
        <location evidence="1">Cell membrane</location>
        <topology evidence="1">Lipid-anchor</topology>
    </subcellularLocation>
</comment>
<comment type="disruption phenotype">
    <text evidence="3">Probably essential, it was not disrupted in a global transposon mutagenesis study.</text>
</comment>
<comment type="similarity">
    <text evidence="4">Belongs to the MG307/MG309/MG338 family.</text>
</comment>
<evidence type="ECO:0000255" key="1">
    <source>
        <dbReference type="PROSITE-ProRule" id="PRU00303"/>
    </source>
</evidence>
<evidence type="ECO:0000256" key="2">
    <source>
        <dbReference type="SAM" id="MobiDB-lite"/>
    </source>
</evidence>
<evidence type="ECO:0000269" key="3">
    <source>
    </source>
</evidence>
<evidence type="ECO:0000305" key="4"/>
<dbReference type="EMBL" id="L43967">
    <property type="protein sequence ID" value="AAC71531.2"/>
    <property type="molecule type" value="Genomic_DNA"/>
</dbReference>
<dbReference type="EMBL" id="U02200">
    <property type="protein sequence ID" value="AAD12488.1"/>
    <property type="molecule type" value="Genomic_DNA"/>
</dbReference>
<dbReference type="PIR" id="B64234">
    <property type="entry name" value="B64234"/>
</dbReference>
<dbReference type="RefSeq" id="WP_010869423.1">
    <property type="nucleotide sequence ID" value="NC_000908.2"/>
</dbReference>
<dbReference type="STRING" id="243273.MG_309"/>
<dbReference type="GeneID" id="88282472"/>
<dbReference type="KEGG" id="mge:MG_309"/>
<dbReference type="eggNOG" id="ENOG5031Y88">
    <property type="taxonomic scope" value="Bacteria"/>
</dbReference>
<dbReference type="HOGENOM" id="CLU_007912_0_0_14"/>
<dbReference type="InParanoid" id="P47551"/>
<dbReference type="Proteomes" id="UP000000807">
    <property type="component" value="Chromosome"/>
</dbReference>
<dbReference type="GO" id="GO:0005886">
    <property type="term" value="C:plasma membrane"/>
    <property type="evidence" value="ECO:0007669"/>
    <property type="project" value="UniProtKB-SubCell"/>
</dbReference>
<dbReference type="InterPro" id="IPR022186">
    <property type="entry name" value="DUF3713"/>
</dbReference>
<dbReference type="Pfam" id="PF12506">
    <property type="entry name" value="DUF3713"/>
    <property type="match status" value="1"/>
</dbReference>
<dbReference type="PROSITE" id="PS51257">
    <property type="entry name" value="PROKAR_LIPOPROTEIN"/>
    <property type="match status" value="1"/>
</dbReference>
<keyword id="KW-1003">Cell membrane</keyword>
<keyword id="KW-0449">Lipoprotein</keyword>
<keyword id="KW-0472">Membrane</keyword>
<keyword id="KW-0564">Palmitate</keyword>
<keyword id="KW-1185">Reference proteome</keyword>
<keyword id="KW-0732">Signal</keyword>
<reference key="1">
    <citation type="journal article" date="1995" name="Science">
        <title>The minimal gene complement of Mycoplasma genitalium.</title>
        <authorList>
            <person name="Fraser C.M."/>
            <person name="Gocayne J.D."/>
            <person name="White O."/>
            <person name="Adams M.D."/>
            <person name="Clayton R.A."/>
            <person name="Fleischmann R.D."/>
            <person name="Bult C.J."/>
            <person name="Kerlavage A.R."/>
            <person name="Sutton G.G."/>
            <person name="Kelley J.M."/>
            <person name="Fritchman J.L."/>
            <person name="Weidman J.F."/>
            <person name="Small K.V."/>
            <person name="Sandusky M."/>
            <person name="Fuhrmann J.L."/>
            <person name="Nguyen D.T."/>
            <person name="Utterback T.R."/>
            <person name="Saudek D.M."/>
            <person name="Phillips C.A."/>
            <person name="Merrick J.M."/>
            <person name="Tomb J.-F."/>
            <person name="Dougherty B.A."/>
            <person name="Bott K.F."/>
            <person name="Hu P.-C."/>
            <person name="Lucier T.S."/>
            <person name="Peterson S.N."/>
            <person name="Smith H.O."/>
            <person name="Hutchison C.A. III"/>
            <person name="Venter J.C."/>
        </authorList>
    </citation>
    <scope>NUCLEOTIDE SEQUENCE [LARGE SCALE GENOMIC DNA]</scope>
    <source>
        <strain>ATCC 33530 / DSM 19775 / NCTC 10195 / G37</strain>
    </source>
</reference>
<reference key="2">
    <citation type="journal article" date="1993" name="J. Bacteriol.">
        <title>A survey of the Mycoplasma genitalium genome by using random sequencing.</title>
        <authorList>
            <person name="Peterson S.N."/>
            <person name="Hu P.-C."/>
            <person name="Bott K.F."/>
            <person name="Hutchison C.A. III"/>
        </authorList>
    </citation>
    <scope>NUCLEOTIDE SEQUENCE [GENOMIC DNA] OF 1138-1224</scope>
    <source>
        <strain>ATCC 33530 / DSM 19775 / NCTC 10195 / G37</strain>
    </source>
</reference>
<reference key="3">
    <citation type="journal article" date="2006" name="Proc. Natl. Acad. Sci. U.S.A.">
        <title>Essential genes of a minimal bacterium.</title>
        <authorList>
            <person name="Glass J.I."/>
            <person name="Assad-Garcia N."/>
            <person name="Alperovich N."/>
            <person name="Yooseph S."/>
            <person name="Lewis M.R."/>
            <person name="Maruf M."/>
            <person name="Hutchison C.A. III"/>
            <person name="Smith H.O."/>
            <person name="Venter J.C."/>
        </authorList>
    </citation>
    <scope>SEQUENCE REVISION TO 844</scope>
    <scope>DISRUPTION PHENOTYPE</scope>
    <source>
        <strain>ATCC 33530 / DSM 19775 / NCTC 10195 / G37</strain>
    </source>
</reference>
<feature type="signal peptide" evidence="1">
    <location>
        <begin position="1"/>
        <end position="27"/>
    </location>
</feature>
<feature type="chain" id="PRO_0000014032" description="Uncharacterized lipoprotein MG309">
    <location>
        <begin position="28"/>
        <end position="1225"/>
    </location>
</feature>
<feature type="region of interest" description="Disordered" evidence="2">
    <location>
        <begin position="995"/>
        <end position="1014"/>
    </location>
</feature>
<feature type="lipid moiety-binding region" description="N-palmitoyl cysteine" evidence="1">
    <location>
        <position position="28"/>
    </location>
</feature>
<feature type="lipid moiety-binding region" description="S-diacylglycerol cysteine" evidence="1">
    <location>
        <position position="28"/>
    </location>
</feature>
<feature type="sequence conflict" description="In Ref. 2; AAD12488." evidence="4" ref="2">
    <original>L</original>
    <variation>V</variation>
    <location>
        <position position="1185"/>
    </location>
</feature>
<name>Y309_MYCGE</name>
<proteinExistence type="inferred from homology"/>
<gene>
    <name type="ordered locus">MG309</name>
</gene>
<accession>P47551</accession>
<accession>Q49317</accession>
<protein>
    <recommendedName>
        <fullName>Uncharacterized lipoprotein MG309</fullName>
    </recommendedName>
</protein>
<organism>
    <name type="scientific">Mycoplasma genitalium (strain ATCC 33530 / DSM 19775 / NCTC 10195 / G37)</name>
    <name type="common">Mycoplasmoides genitalium</name>
    <dbReference type="NCBI Taxonomy" id="243273"/>
    <lineage>
        <taxon>Bacteria</taxon>
        <taxon>Bacillati</taxon>
        <taxon>Mycoplasmatota</taxon>
        <taxon>Mycoplasmoidales</taxon>
        <taxon>Mycoplasmoidaceae</taxon>
        <taxon>Mycoplasmoides</taxon>
    </lineage>
</organism>